<sequence length="275" mass="31456">MSGEGNLGKDHEEENEAPLPGFRFHPTDEELLGYYLRRKVENKTIKLELIKQIDIYKYDPWDLPRVSSVGEKEWYFFCMRGRKYRNSVRPNRVTGSGFWKATGIDKPVYSNLDCVGLKKSLVYYLGSAGKGTKTDWMMHEFRLPSTTKTDSPAQQAEVWTLCRIFKRVTSQRNPTILPPNRKPVITLTDTCSKTSSLDSDHTSHRTVDSMSHEPPLPQPQNPYWNQHIVGFNQPTYTGNDNNLLMSFWNGNGGDFIGDSASWDELRSVIDGNTKP</sequence>
<dbReference type="EMBL" id="AC006580">
    <property type="protein sequence ID" value="AAD22369.1"/>
    <property type="molecule type" value="Genomic_DNA"/>
</dbReference>
<dbReference type="EMBL" id="CP002685">
    <property type="protein sequence ID" value="AEC10196.1"/>
    <property type="molecule type" value="Genomic_DNA"/>
</dbReference>
<dbReference type="EMBL" id="AB493587">
    <property type="protein sequence ID" value="BAH30425.1"/>
    <property type="molecule type" value="mRNA"/>
</dbReference>
<dbReference type="PIR" id="G84860">
    <property type="entry name" value="G84860"/>
</dbReference>
<dbReference type="RefSeq" id="NP_181828.1">
    <property type="nucleotide sequence ID" value="NM_129861.3"/>
</dbReference>
<dbReference type="SMR" id="Q9SK55"/>
<dbReference type="BioGRID" id="4239">
    <property type="interactions" value="3"/>
</dbReference>
<dbReference type="FunCoup" id="Q9SK55">
    <property type="interactions" value="19"/>
</dbReference>
<dbReference type="IntAct" id="Q9SK55">
    <property type="interactions" value="2"/>
</dbReference>
<dbReference type="STRING" id="3702.Q9SK55"/>
<dbReference type="PaxDb" id="3702-AT2G43000.1"/>
<dbReference type="EnsemblPlants" id="AT2G43000.1">
    <property type="protein sequence ID" value="AT2G43000.1"/>
    <property type="gene ID" value="AT2G43000"/>
</dbReference>
<dbReference type="GeneID" id="818902"/>
<dbReference type="Gramene" id="AT2G43000.1">
    <property type="protein sequence ID" value="AT2G43000.1"/>
    <property type="gene ID" value="AT2G43000"/>
</dbReference>
<dbReference type="KEGG" id="ath:AT2G43000"/>
<dbReference type="Araport" id="AT2G43000"/>
<dbReference type="TAIR" id="AT2G43000">
    <property type="gene designation" value="NAC042"/>
</dbReference>
<dbReference type="eggNOG" id="ENOG502QUH6">
    <property type="taxonomic scope" value="Eukaryota"/>
</dbReference>
<dbReference type="HOGENOM" id="CLU_035664_0_0_1"/>
<dbReference type="InParanoid" id="Q9SK55"/>
<dbReference type="OMA" id="HENWDDL"/>
<dbReference type="OrthoDB" id="1883668at2759"/>
<dbReference type="PhylomeDB" id="Q9SK55"/>
<dbReference type="PRO" id="PR:Q9SK55"/>
<dbReference type="Proteomes" id="UP000006548">
    <property type="component" value="Chromosome 2"/>
</dbReference>
<dbReference type="ExpressionAtlas" id="Q9SK55">
    <property type="expression patterns" value="baseline and differential"/>
</dbReference>
<dbReference type="GO" id="GO:0005634">
    <property type="term" value="C:nucleus"/>
    <property type="evidence" value="ECO:0000314"/>
    <property type="project" value="TAIR"/>
</dbReference>
<dbReference type="GO" id="GO:0003677">
    <property type="term" value="F:DNA binding"/>
    <property type="evidence" value="ECO:0007669"/>
    <property type="project" value="UniProtKB-KW"/>
</dbReference>
<dbReference type="GO" id="GO:0003700">
    <property type="term" value="F:DNA-binding transcription factor activity"/>
    <property type="evidence" value="ECO:0000250"/>
    <property type="project" value="TAIR"/>
</dbReference>
<dbReference type="GO" id="GO:0009718">
    <property type="term" value="P:anthocyanin-containing compound biosynthetic process"/>
    <property type="evidence" value="ECO:0000315"/>
    <property type="project" value="TAIR"/>
</dbReference>
<dbReference type="GO" id="GO:0010120">
    <property type="term" value="P:camalexin biosynthetic process"/>
    <property type="evidence" value="ECO:0000315"/>
    <property type="project" value="TAIR"/>
</dbReference>
<dbReference type="GO" id="GO:0042538">
    <property type="term" value="P:hyperosmotic salinity response"/>
    <property type="evidence" value="ECO:0000315"/>
    <property type="project" value="TAIR"/>
</dbReference>
<dbReference type="GO" id="GO:0010150">
    <property type="term" value="P:leaf senescence"/>
    <property type="evidence" value="ECO:0000315"/>
    <property type="project" value="TAIR"/>
</dbReference>
<dbReference type="GO" id="GO:1900056">
    <property type="term" value="P:negative regulation of leaf senescence"/>
    <property type="evidence" value="ECO:0000315"/>
    <property type="project" value="TAIR"/>
</dbReference>
<dbReference type="GO" id="GO:0006561">
    <property type="term" value="P:proline biosynthetic process"/>
    <property type="evidence" value="ECO:0000315"/>
    <property type="project" value="TAIR"/>
</dbReference>
<dbReference type="GO" id="GO:2000377">
    <property type="term" value="P:regulation of reactive oxygen species metabolic process"/>
    <property type="evidence" value="ECO:0000316"/>
    <property type="project" value="TAIR"/>
</dbReference>
<dbReference type="GO" id="GO:0005992">
    <property type="term" value="P:trehalose biosynthetic process"/>
    <property type="evidence" value="ECO:0000315"/>
    <property type="project" value="TAIR"/>
</dbReference>
<dbReference type="FunFam" id="2.170.150.80:FF:000007">
    <property type="entry name" value="NAC domain-containing protein 35"/>
    <property type="match status" value="1"/>
</dbReference>
<dbReference type="Gene3D" id="2.170.150.80">
    <property type="entry name" value="NAC domain"/>
    <property type="match status" value="1"/>
</dbReference>
<dbReference type="InterPro" id="IPR003441">
    <property type="entry name" value="NAC-dom"/>
</dbReference>
<dbReference type="InterPro" id="IPR036093">
    <property type="entry name" value="NAC_dom_sf"/>
</dbReference>
<dbReference type="PANTHER" id="PTHR31744">
    <property type="entry name" value="PROTEIN CUP-SHAPED COTYLEDON 2-RELATED"/>
    <property type="match status" value="1"/>
</dbReference>
<dbReference type="PANTHER" id="PTHR31744:SF65">
    <property type="entry name" value="TRANSCRIPTION FACTOR JUNGBRUNNEN 1"/>
    <property type="match status" value="1"/>
</dbReference>
<dbReference type="Pfam" id="PF02365">
    <property type="entry name" value="NAM"/>
    <property type="match status" value="1"/>
</dbReference>
<dbReference type="SUPFAM" id="SSF101941">
    <property type="entry name" value="NAC domain"/>
    <property type="match status" value="1"/>
</dbReference>
<dbReference type="PROSITE" id="PS51005">
    <property type="entry name" value="NAC"/>
    <property type="match status" value="1"/>
</dbReference>
<evidence type="ECO:0000255" key="1">
    <source>
        <dbReference type="PROSITE-ProRule" id="PRU00353"/>
    </source>
</evidence>
<evidence type="ECO:0000256" key="2">
    <source>
        <dbReference type="SAM" id="MobiDB-lite"/>
    </source>
</evidence>
<evidence type="ECO:0000269" key="3">
    <source>
    </source>
</evidence>
<organism>
    <name type="scientific">Arabidopsis thaliana</name>
    <name type="common">Mouse-ear cress</name>
    <dbReference type="NCBI Taxonomy" id="3702"/>
    <lineage>
        <taxon>Eukaryota</taxon>
        <taxon>Viridiplantae</taxon>
        <taxon>Streptophyta</taxon>
        <taxon>Embryophyta</taxon>
        <taxon>Tracheophyta</taxon>
        <taxon>Spermatophyta</taxon>
        <taxon>Magnoliopsida</taxon>
        <taxon>eudicotyledons</taxon>
        <taxon>Gunneridae</taxon>
        <taxon>Pentapetalae</taxon>
        <taxon>rosids</taxon>
        <taxon>malvids</taxon>
        <taxon>Brassicales</taxon>
        <taxon>Brassicaceae</taxon>
        <taxon>Camelineae</taxon>
        <taxon>Arabidopsis</taxon>
    </lineage>
</organism>
<reference key="1">
    <citation type="journal article" date="1999" name="Nature">
        <title>Sequence and analysis of chromosome 2 of the plant Arabidopsis thaliana.</title>
        <authorList>
            <person name="Lin X."/>
            <person name="Kaul S."/>
            <person name="Rounsley S.D."/>
            <person name="Shea T.P."/>
            <person name="Benito M.-I."/>
            <person name="Town C.D."/>
            <person name="Fujii C.Y."/>
            <person name="Mason T.M."/>
            <person name="Bowman C.L."/>
            <person name="Barnstead M.E."/>
            <person name="Feldblyum T.V."/>
            <person name="Buell C.R."/>
            <person name="Ketchum K.A."/>
            <person name="Lee J.J."/>
            <person name="Ronning C.M."/>
            <person name="Koo H.L."/>
            <person name="Moffat K.S."/>
            <person name="Cronin L.A."/>
            <person name="Shen M."/>
            <person name="Pai G."/>
            <person name="Van Aken S."/>
            <person name="Umayam L."/>
            <person name="Tallon L.J."/>
            <person name="Gill J.E."/>
            <person name="Adams M.D."/>
            <person name="Carrera A.J."/>
            <person name="Creasy T.H."/>
            <person name="Goodman H.M."/>
            <person name="Somerville C.R."/>
            <person name="Copenhaver G.P."/>
            <person name="Preuss D."/>
            <person name="Nierman W.C."/>
            <person name="White O."/>
            <person name="Eisen J.A."/>
            <person name="Salzberg S.L."/>
            <person name="Fraser C.M."/>
            <person name="Venter J.C."/>
        </authorList>
    </citation>
    <scope>NUCLEOTIDE SEQUENCE [LARGE SCALE GENOMIC DNA]</scope>
    <source>
        <strain>cv. Columbia</strain>
    </source>
</reference>
<reference key="2">
    <citation type="journal article" date="2017" name="Plant J.">
        <title>Araport11: a complete reannotation of the Arabidopsis thaliana reference genome.</title>
        <authorList>
            <person name="Cheng C.Y."/>
            <person name="Krishnakumar V."/>
            <person name="Chan A.P."/>
            <person name="Thibaud-Nissen F."/>
            <person name="Schobel S."/>
            <person name="Town C.D."/>
        </authorList>
    </citation>
    <scope>GENOME REANNOTATION</scope>
    <source>
        <strain>cv. Columbia</strain>
    </source>
</reference>
<reference key="3">
    <citation type="submission" date="2009-03" db="EMBL/GenBank/DDBJ databases">
        <title>ORF cloning and analysis of Arabidopsis transcription factor genes.</title>
        <authorList>
            <person name="Fujita M."/>
            <person name="Mizukado S."/>
            <person name="Seki M."/>
            <person name="Shinozaki K."/>
            <person name="Mitsuda N."/>
            <person name="Takiguchi Y."/>
            <person name="Takagi M."/>
        </authorList>
    </citation>
    <scope>NUCLEOTIDE SEQUENCE [LARGE SCALE MRNA]</scope>
</reference>
<reference key="4">
    <citation type="journal article" date="2003" name="DNA Res.">
        <title>Comprehensive analysis of NAC family genes in Oryza sativa and Arabidopsis thaliana.</title>
        <authorList>
            <person name="Ooka H."/>
            <person name="Satoh K."/>
            <person name="Doi K."/>
            <person name="Nagata T."/>
            <person name="Otomo Y."/>
            <person name="Murakami K."/>
            <person name="Matsubara K."/>
            <person name="Osato N."/>
            <person name="Kawai J."/>
            <person name="Carninci P."/>
            <person name="Hayashizaki Y."/>
            <person name="Suzuki K."/>
            <person name="Kojima K."/>
            <person name="Takahara Y."/>
            <person name="Yamamoto K."/>
            <person name="Kikuchi S."/>
        </authorList>
    </citation>
    <scope>GENE FAMILY</scope>
    <scope>NOMENCLATURE</scope>
</reference>
<reference key="5">
    <citation type="journal article" date="2012" name="Plant Cell">
        <title>JUNGBRUNNEN1, a reactive oxygen species-responsive NAC transcription factor, regulates longevity in Arabidopsis.</title>
        <authorList>
            <person name="Wu A."/>
            <person name="Allu A.D."/>
            <person name="Garapati P."/>
            <person name="Siddiqui H."/>
            <person name="Dortay H."/>
            <person name="Zanor M.I."/>
            <person name="Asensi-Fabado M.A."/>
            <person name="Munne-Bosch S."/>
            <person name="Antonio C."/>
            <person name="Tohge T."/>
            <person name="Fernie A.R."/>
            <person name="Kaufmann K."/>
            <person name="Xue G.P."/>
            <person name="Mueller-Roeber B."/>
            <person name="Balazadeh S."/>
        </authorList>
    </citation>
    <scope>FUNCTION</scope>
    <scope>DISRUPTION PHENOTYPE</scope>
    <scope>INDUCTION</scope>
    <scope>SUBCELLULAR LOCATION</scope>
    <scope>TISSUE SPECIFICITY</scope>
    <scope>DNA-BINDING</scope>
    <source>
        <strain>cv. Columbia</strain>
    </source>
</reference>
<proteinExistence type="evidence at protein level"/>
<protein>
    <recommendedName>
        <fullName>Transcription factor JUNGBRUNNEN 1</fullName>
    </recommendedName>
    <alternativeName>
        <fullName>NAC domain-containing protein 42</fullName>
        <shortName>ANAC042</shortName>
    </alternativeName>
</protein>
<feature type="chain" id="PRO_0000132312" description="Transcription factor JUNGBRUNNEN 1">
    <location>
        <begin position="1"/>
        <end position="275"/>
    </location>
</feature>
<feature type="domain" description="NAC" evidence="1">
    <location>
        <begin position="18"/>
        <end position="167"/>
    </location>
</feature>
<feature type="DNA-binding region" evidence="1">
    <location>
        <begin position="115"/>
        <end position="173"/>
    </location>
</feature>
<feature type="region of interest" description="Disordered" evidence="2">
    <location>
        <begin position="1"/>
        <end position="24"/>
    </location>
</feature>
<feature type="region of interest" description="Disordered" evidence="2">
    <location>
        <begin position="191"/>
        <end position="219"/>
    </location>
</feature>
<feature type="compositionally biased region" description="Basic and acidic residues" evidence="2">
    <location>
        <begin position="198"/>
        <end position="211"/>
    </location>
</feature>
<keyword id="KW-0238">DNA-binding</keyword>
<keyword id="KW-0539">Nucleus</keyword>
<keyword id="KW-1185">Reference proteome</keyword>
<keyword id="KW-0804">Transcription</keyword>
<keyword id="KW-0805">Transcription regulation</keyword>
<name>NAC42_ARATH</name>
<accession>Q9SK55</accession>
<accession>C0SV84</accession>
<gene>
    <name type="primary">JUB1</name>
    <name type="synonym">NAC042</name>
    <name type="ordered locus">At2g43000</name>
    <name type="ORF">F23E6.1</name>
</gene>
<comment type="function">
    <text evidence="3">Transcription factor that binds to the 5'- RRYGCCGT-3' consensus core sequence. Central longevity regulator. Negative regulator of leaf senescence. Modulates cellular H(2)O(2) levels and enhances tolerance to various abiotic stresses through the regulation of DREB2A.</text>
</comment>
<comment type="subcellular location">
    <subcellularLocation>
        <location evidence="1 3">Nucleus</location>
    </subcellularLocation>
</comment>
<comment type="tissue specificity">
    <text evidence="3">Expressed in roots, root caps, cotyledons, tips and margin of young leaves, senescent regions of fully expanded leaves and floral tissues, including old sepals, petals, staments, mature anthers and pollen grains. Not detected in the abscission zone of open flowers, emerging lateral roots and root meristematic zones.</text>
</comment>
<comment type="induction">
    <text evidence="3">Up-regulated by H(2)O(2), paraquat, ozone, 3-aminotriazole and salt stress.</text>
</comment>
<comment type="domain">
    <text>The NAC domain includes a DNA-binding domain and a dimerization domain.</text>
</comment>
<comment type="disruption phenotype">
    <text evidence="3">Precocious senescence and lowered abiotic stress tolerance.</text>
</comment>